<gene>
    <name evidence="22" type="primary">SETMAR</name>
</gene>
<sequence>MFAEAAKTTRPCGMAEFKEKPEAPTEQLDVACGQENLPVGAWPPGAAPAPFQYTPDHVVGPGADIDPTQITFPGCICVKTPCLPGTCSCLRHGENYDDNSCLRDIGSGGKYAEPVFECNVLCRCSDHCRNRVVQKGLQFHFQVFKTHKKGWGLRTLEFIPKGRFVCEYAGEVLGFSEVQRRIHLQTKSDSNYIIAIREHVYNGQVMETFVDPTYIGNIGRFLNHSCEPNLLMIPVRIDSMVPKLALFAAKDIVPEEELSYDYSGRYLNLTVSEDKERLDHGKLRKPCYCGAKSCTAFLPFDSSLYCPVEKSNISCGNEKEPSMCGSAPSVFPSCKRLTLETMKMMLDKKQIRAIFLFEFKMGRKAAETTRNINNAFGPGTANERTVQWWFKKFCKGDESLEDEERSGRPSEVDNDQLRAIIEADPLTTTREVAEELNVNHSTVVRHLKQIGKVKKLDKWVPHELTENQKNRRFEVSSSLILRNHNEPFLDRIVTCDEKWILYDNRRRSAQWLDQEEAPKHFPKPILHPKKVMVTIWWSAAGLIHYSFLNPGETITSEKYAQEIDEMNQKLQRLQLALVNRKGPILLHDNARPHVAQPTLQKLNELGYEVLPHPPYSPDLLPTNYHVFKHLNNFLQGKRFHNQQDAENAFQEFVESQSTDFYATGINQLISRWQKCVDCNGSYFD</sequence>
<accession>Q53H47</accession>
<accession>B4DY74</accession>
<accession>E7EN68</accession>
<accession>Q13579</accession>
<accession>Q1G668</accession>
<accession>Q96F41</accession>
<keyword id="KW-0002">3D-structure</keyword>
<keyword id="KW-0025">Alternative splicing</keyword>
<keyword id="KW-0156">Chromatin regulator</keyword>
<keyword id="KW-0158">Chromosome</keyword>
<keyword id="KW-0227">DNA damage</keyword>
<keyword id="KW-0234">DNA repair</keyword>
<keyword id="KW-0238">DNA-binding</keyword>
<keyword id="KW-0255">Endonuclease</keyword>
<keyword id="KW-0378">Hydrolase</keyword>
<keyword id="KW-0460">Magnesium</keyword>
<keyword id="KW-0479">Metal-binding</keyword>
<keyword id="KW-0488">Methylation</keyword>
<keyword id="KW-0489">Methyltransferase</keyword>
<keyword id="KW-0511">Multifunctional enzyme</keyword>
<keyword id="KW-0540">Nuclease</keyword>
<keyword id="KW-0539">Nucleus</keyword>
<keyword id="KW-0597">Phosphoprotein</keyword>
<keyword id="KW-1267">Proteomics identification</keyword>
<keyword id="KW-1185">Reference proteome</keyword>
<keyword id="KW-0949">S-adenosyl-L-methionine</keyword>
<keyword id="KW-0808">Transferase</keyword>
<keyword id="KW-0862">Zinc</keyword>
<reference key="1">
    <citation type="journal article" date="2004" name="Nat. Genet.">
        <title>Complete sequencing and characterization of 21,243 full-length human cDNAs.</title>
        <authorList>
            <person name="Ota T."/>
            <person name="Suzuki Y."/>
            <person name="Nishikawa T."/>
            <person name="Otsuki T."/>
            <person name="Sugiyama T."/>
            <person name="Irie R."/>
            <person name="Wakamatsu A."/>
            <person name="Hayashi K."/>
            <person name="Sato H."/>
            <person name="Nagai K."/>
            <person name="Kimura K."/>
            <person name="Makita H."/>
            <person name="Sekine M."/>
            <person name="Obayashi M."/>
            <person name="Nishi T."/>
            <person name="Shibahara T."/>
            <person name="Tanaka T."/>
            <person name="Ishii S."/>
            <person name="Yamamoto J."/>
            <person name="Saito K."/>
            <person name="Kawai Y."/>
            <person name="Isono Y."/>
            <person name="Nakamura Y."/>
            <person name="Nagahari K."/>
            <person name="Murakami K."/>
            <person name="Yasuda T."/>
            <person name="Iwayanagi T."/>
            <person name="Wagatsuma M."/>
            <person name="Shiratori A."/>
            <person name="Sudo H."/>
            <person name="Hosoiri T."/>
            <person name="Kaku Y."/>
            <person name="Kodaira H."/>
            <person name="Kondo H."/>
            <person name="Sugawara M."/>
            <person name="Takahashi M."/>
            <person name="Kanda K."/>
            <person name="Yokoi T."/>
            <person name="Furuya T."/>
            <person name="Kikkawa E."/>
            <person name="Omura Y."/>
            <person name="Abe K."/>
            <person name="Kamihara K."/>
            <person name="Katsuta N."/>
            <person name="Sato K."/>
            <person name="Tanikawa M."/>
            <person name="Yamazaki M."/>
            <person name="Ninomiya K."/>
            <person name="Ishibashi T."/>
            <person name="Yamashita H."/>
            <person name="Murakawa K."/>
            <person name="Fujimori K."/>
            <person name="Tanai H."/>
            <person name="Kimata M."/>
            <person name="Watanabe M."/>
            <person name="Hiraoka S."/>
            <person name="Chiba Y."/>
            <person name="Ishida S."/>
            <person name="Ono Y."/>
            <person name="Takiguchi S."/>
            <person name="Watanabe S."/>
            <person name="Yosida M."/>
            <person name="Hotuta T."/>
            <person name="Kusano J."/>
            <person name="Kanehori K."/>
            <person name="Takahashi-Fujii A."/>
            <person name="Hara H."/>
            <person name="Tanase T.-O."/>
            <person name="Nomura Y."/>
            <person name="Togiya S."/>
            <person name="Komai F."/>
            <person name="Hara R."/>
            <person name="Takeuchi K."/>
            <person name="Arita M."/>
            <person name="Imose N."/>
            <person name="Musashino K."/>
            <person name="Yuuki H."/>
            <person name="Oshima A."/>
            <person name="Sasaki N."/>
            <person name="Aotsuka S."/>
            <person name="Yoshikawa Y."/>
            <person name="Matsunawa H."/>
            <person name="Ichihara T."/>
            <person name="Shiohata N."/>
            <person name="Sano S."/>
            <person name="Moriya S."/>
            <person name="Momiyama H."/>
            <person name="Satoh N."/>
            <person name="Takami S."/>
            <person name="Terashima Y."/>
            <person name="Suzuki O."/>
            <person name="Nakagawa S."/>
            <person name="Senoh A."/>
            <person name="Mizoguchi H."/>
            <person name="Goto Y."/>
            <person name="Shimizu F."/>
            <person name="Wakebe H."/>
            <person name="Hishigaki H."/>
            <person name="Watanabe T."/>
            <person name="Sugiyama A."/>
            <person name="Takemoto M."/>
            <person name="Kawakami B."/>
            <person name="Yamazaki M."/>
            <person name="Watanabe K."/>
            <person name="Kumagai A."/>
            <person name="Itakura S."/>
            <person name="Fukuzumi Y."/>
            <person name="Fujimori Y."/>
            <person name="Komiyama M."/>
            <person name="Tashiro H."/>
            <person name="Tanigami A."/>
            <person name="Fujiwara T."/>
            <person name="Ono T."/>
            <person name="Yamada K."/>
            <person name="Fujii Y."/>
            <person name="Ozaki K."/>
            <person name="Hirao M."/>
            <person name="Ohmori Y."/>
            <person name="Kawabata A."/>
            <person name="Hikiji T."/>
            <person name="Kobatake N."/>
            <person name="Inagaki H."/>
            <person name="Ikema Y."/>
            <person name="Okamoto S."/>
            <person name="Okitani R."/>
            <person name="Kawakami T."/>
            <person name="Noguchi S."/>
            <person name="Itoh T."/>
            <person name="Shigeta K."/>
            <person name="Senba T."/>
            <person name="Matsumura K."/>
            <person name="Nakajima Y."/>
            <person name="Mizuno T."/>
            <person name="Morinaga M."/>
            <person name="Sasaki M."/>
            <person name="Togashi T."/>
            <person name="Oyama M."/>
            <person name="Hata H."/>
            <person name="Watanabe M."/>
            <person name="Komatsu T."/>
            <person name="Mizushima-Sugano J."/>
            <person name="Satoh T."/>
            <person name="Shirai Y."/>
            <person name="Takahashi Y."/>
            <person name="Nakagawa K."/>
            <person name="Okumura K."/>
            <person name="Nagase T."/>
            <person name="Nomura N."/>
            <person name="Kikuchi H."/>
            <person name="Masuho Y."/>
            <person name="Yamashita R."/>
            <person name="Nakai K."/>
            <person name="Yada T."/>
            <person name="Nakamura Y."/>
            <person name="Ohara O."/>
            <person name="Isogai T."/>
            <person name="Sugano S."/>
        </authorList>
    </citation>
    <scope>NUCLEOTIDE SEQUENCE [LARGE SCALE MRNA] (ISOFORMS 1 AND 2)</scope>
</reference>
<reference key="2">
    <citation type="journal article" date="2006" name="Nature">
        <title>The DNA sequence, annotation and analysis of human chromosome 3.</title>
        <authorList>
            <person name="Muzny D.M."/>
            <person name="Scherer S.E."/>
            <person name="Kaul R."/>
            <person name="Wang J."/>
            <person name="Yu J."/>
            <person name="Sudbrak R."/>
            <person name="Buhay C.J."/>
            <person name="Chen R."/>
            <person name="Cree A."/>
            <person name="Ding Y."/>
            <person name="Dugan-Rocha S."/>
            <person name="Gill R."/>
            <person name="Gunaratne P."/>
            <person name="Harris R.A."/>
            <person name="Hawes A.C."/>
            <person name="Hernandez J."/>
            <person name="Hodgson A.V."/>
            <person name="Hume J."/>
            <person name="Jackson A."/>
            <person name="Khan Z.M."/>
            <person name="Kovar-Smith C."/>
            <person name="Lewis L.R."/>
            <person name="Lozado R.J."/>
            <person name="Metzker M.L."/>
            <person name="Milosavljevic A."/>
            <person name="Miner G.R."/>
            <person name="Morgan M.B."/>
            <person name="Nazareth L.V."/>
            <person name="Scott G."/>
            <person name="Sodergren E."/>
            <person name="Song X.-Z."/>
            <person name="Steffen D."/>
            <person name="Wei S."/>
            <person name="Wheeler D.A."/>
            <person name="Wright M.W."/>
            <person name="Worley K.C."/>
            <person name="Yuan Y."/>
            <person name="Zhang Z."/>
            <person name="Adams C.Q."/>
            <person name="Ansari-Lari M.A."/>
            <person name="Ayele M."/>
            <person name="Brown M.J."/>
            <person name="Chen G."/>
            <person name="Chen Z."/>
            <person name="Clendenning J."/>
            <person name="Clerc-Blankenburg K.P."/>
            <person name="Chen R."/>
            <person name="Chen Z."/>
            <person name="Davis C."/>
            <person name="Delgado O."/>
            <person name="Dinh H.H."/>
            <person name="Dong W."/>
            <person name="Draper H."/>
            <person name="Ernst S."/>
            <person name="Fu G."/>
            <person name="Gonzalez-Garay M.L."/>
            <person name="Garcia D.K."/>
            <person name="Gillett W."/>
            <person name="Gu J."/>
            <person name="Hao B."/>
            <person name="Haugen E."/>
            <person name="Havlak P."/>
            <person name="He X."/>
            <person name="Hennig S."/>
            <person name="Hu S."/>
            <person name="Huang W."/>
            <person name="Jackson L.R."/>
            <person name="Jacob L.S."/>
            <person name="Kelly S.H."/>
            <person name="Kube M."/>
            <person name="Levy R."/>
            <person name="Li Z."/>
            <person name="Liu B."/>
            <person name="Liu J."/>
            <person name="Liu W."/>
            <person name="Lu J."/>
            <person name="Maheshwari M."/>
            <person name="Nguyen B.-V."/>
            <person name="Okwuonu G.O."/>
            <person name="Palmeiri A."/>
            <person name="Pasternak S."/>
            <person name="Perez L.M."/>
            <person name="Phelps K.A."/>
            <person name="Plopper F.J."/>
            <person name="Qiang B."/>
            <person name="Raymond C."/>
            <person name="Rodriguez R."/>
            <person name="Saenphimmachak C."/>
            <person name="Santibanez J."/>
            <person name="Shen H."/>
            <person name="Shen Y."/>
            <person name="Subramanian S."/>
            <person name="Tabor P.E."/>
            <person name="Verduzco D."/>
            <person name="Waldron L."/>
            <person name="Wang J."/>
            <person name="Wang J."/>
            <person name="Wang Q."/>
            <person name="Williams G.A."/>
            <person name="Wong G.K.-S."/>
            <person name="Yao Z."/>
            <person name="Zhang J."/>
            <person name="Zhang X."/>
            <person name="Zhao G."/>
            <person name="Zhou J."/>
            <person name="Zhou Y."/>
            <person name="Nelson D."/>
            <person name="Lehrach H."/>
            <person name="Reinhardt R."/>
            <person name="Naylor S.L."/>
            <person name="Yang H."/>
            <person name="Olson M."/>
            <person name="Weinstock G."/>
            <person name="Gibbs R.A."/>
        </authorList>
    </citation>
    <scope>NUCLEOTIDE SEQUENCE [LARGE SCALE GENOMIC DNA]</scope>
</reference>
<reference key="3">
    <citation type="journal article" date="2004" name="Genome Res.">
        <title>The status, quality, and expansion of the NIH full-length cDNA project: the Mammalian Gene Collection (MGC).</title>
        <authorList>
            <consortium name="The MGC Project Team"/>
        </authorList>
    </citation>
    <scope>NUCLEOTIDE SEQUENCE [LARGE SCALE MRNA] OF 14-684 (ISOFORM 2)</scope>
    <source>
        <tissue>Uterus</tissue>
    </source>
</reference>
<reference key="4">
    <citation type="journal article" date="2005" name="Proc. Natl. Acad. Sci. U.S.A.">
        <title>The SET domain protein Metnase mediates foreign DNA integration and links integration to nonhomologous end-joining repair.</title>
        <authorList>
            <person name="Lee S.-H."/>
            <person name="Oshige M."/>
            <person name="Durant S.T."/>
            <person name="Rasila K.K."/>
            <person name="Williamson E.A."/>
            <person name="Ramsey H."/>
            <person name="Kwan L."/>
            <person name="Nickoloff J.A."/>
            <person name="Hromas R."/>
        </authorList>
    </citation>
    <scope>NUCLEOTIDE SEQUENCE [MRNA] OF 14-684 (ISOFORM 1)</scope>
    <scope>FUNCTION</scope>
    <scope>CATALYTIC ACTIVITY</scope>
    <scope>TISSUE SPECIFICITY</scope>
    <scope>MUTAGENESIS OF ASN-223; ASP-261 AND ASP-503</scope>
</reference>
<reference key="5">
    <citation type="journal article" date="2006" name="Proc. Natl. Acad. Sci. U.S.A.">
        <title>Birth of a chimeric primate gene by capture of the transposase gene from a mobile element.</title>
        <authorList>
            <person name="Cordaux R."/>
            <person name="Udit S."/>
            <person name="Batzer M.A."/>
            <person name="Feschotte C."/>
        </authorList>
    </citation>
    <scope>NUCLEOTIDE SEQUENCE [GENOMIC DNA] OF 341-684</scope>
    <scope>FUNCTION</scope>
    <scope>DNA-BINDING</scope>
</reference>
<reference key="6">
    <citation type="journal article" date="1997" name="Gene">
        <title>Molecular evolution of an ancient mariner transposon, Hsmar1, in the human genome.</title>
        <authorList>
            <person name="Robertson H.M."/>
            <person name="Zumpano K.L."/>
        </authorList>
    </citation>
    <scope>NUCLEOTIDE SEQUENCE [GENOMIC DNA] OF 342-684</scope>
</reference>
<reference key="7">
    <citation type="journal article" date="2007" name="Biochemistry">
        <title>Biochemical characterization of a SET and transposase fusion protein, Metnase: its DNA binding and DNA cleavage activity.</title>
        <authorList>
            <person name="Roman Y."/>
            <person name="Oshige M."/>
            <person name="Lee Y.J."/>
            <person name="Goodwin K."/>
            <person name="Georgiadis M.M."/>
            <person name="Hromas R.A."/>
            <person name="Lee S.H."/>
        </authorList>
    </citation>
    <scope>FUNCTION</scope>
    <scope>DNA CLEAVAGE ACTIVITY</scope>
    <scope>MUTAGENESIS OF ARG-445 AND ASP-496</scope>
</reference>
<reference key="8">
    <citation type="journal article" date="2007" name="Mol. Cell. Biol.">
        <title>The ancient mariner sails again: transposition of the human Hsmar1 element by a reconstructed transposase and activities of the SETMAR protein on transposon ends.</title>
        <authorList>
            <person name="Miskey C."/>
            <person name="Papp B."/>
            <person name="Mates L."/>
            <person name="Sinzelle L."/>
            <person name="Keller H."/>
            <person name="Izsvak Z."/>
            <person name="Ivics Z."/>
        </authorList>
    </citation>
    <scope>FUNCTION</scope>
    <scope>LACK OF TRANSPOSASE ACTIVITY</scope>
    <scope>DOMAIN</scope>
</reference>
<reference key="9">
    <citation type="journal article" date="2008" name="J. Biol. Chem.">
        <title>Human Pso4 is a metnase (SETMAR)-binding partner that regulates metnase function in DNA repair.</title>
        <authorList>
            <person name="Beck B.D."/>
            <person name="Park S.J."/>
            <person name="Lee Y.J."/>
            <person name="Roman Y."/>
            <person name="Hromas R.A."/>
            <person name="Lee S.H."/>
        </authorList>
    </citation>
    <scope>FUNCTION</scope>
    <scope>INTERACTION WITH PRPF19</scope>
    <scope>SUBCELLULAR LOCATION</scope>
</reference>
<reference key="10">
    <citation type="journal article" date="2008" name="Nucleic Acids Res.">
        <title>The SET and transposase domain protein Metnase enhances chromosome decatenation: regulation by automethylation.</title>
        <authorList>
            <person name="Williamson E.A."/>
            <person name="Rasila K.K."/>
            <person name="Corwin L.K."/>
            <person name="Wray J."/>
            <person name="Beck B.D."/>
            <person name="Severns V."/>
            <person name="Mobarak C."/>
            <person name="Lee S.H."/>
            <person name="Nickoloff J.A."/>
            <person name="Hromas R."/>
        </authorList>
    </citation>
    <scope>FUNCTION</scope>
    <scope>INTERACTION WITH TOP2A</scope>
    <scope>METHYLATION AT LYS-498</scope>
    <scope>SUBCELLULAR LOCATION</scope>
</reference>
<reference key="11">
    <citation type="journal article" date="2009" name="Sci. Signal.">
        <title>Quantitative phosphoproteomic analysis of T cell receptor signaling reveals system-wide modulation of protein-protein interactions.</title>
        <authorList>
            <person name="Mayya V."/>
            <person name="Lundgren D.H."/>
            <person name="Hwang S.-I."/>
            <person name="Rezaul K."/>
            <person name="Wu L."/>
            <person name="Eng J.K."/>
            <person name="Rodionov V."/>
            <person name="Han D.K."/>
        </authorList>
    </citation>
    <scope>PHOSPHORYLATION [LARGE SCALE ANALYSIS] AT SER-508</scope>
    <scope>IDENTIFICATION BY MASS SPECTROMETRY [LARGE SCALE ANALYSIS]</scope>
    <source>
        <tissue>Leukemic T-cell</tissue>
    </source>
</reference>
<reference key="12">
    <citation type="journal article" date="2009" name="Science">
        <title>Lysine acetylation targets protein complexes and co-regulates major cellular functions.</title>
        <authorList>
            <person name="Choudhary C."/>
            <person name="Kumar C."/>
            <person name="Gnad F."/>
            <person name="Nielsen M.L."/>
            <person name="Rehman M."/>
            <person name="Walther T.C."/>
            <person name="Olsen J.V."/>
            <person name="Mann M."/>
        </authorList>
    </citation>
    <scope>IDENTIFICATION BY MASS SPECTROMETRY [LARGE SCALE ANALYSIS]</scope>
</reference>
<reference key="13">
    <citation type="journal article" date="2010" name="Nucleic Acids Res.">
        <title>Metnase promotes restart and repair of stalled and collapsed replication forks.</title>
        <authorList>
            <person name="De Haro L.P."/>
            <person name="Wray J."/>
            <person name="Williamson E.A."/>
            <person name="Durant S.T."/>
            <person name="Corwin L."/>
            <person name="Gentry A.C."/>
            <person name="Osheroff N."/>
            <person name="Lee S.H."/>
            <person name="Hromas R."/>
            <person name="Nickoloff J.A."/>
        </authorList>
    </citation>
    <scope>FUNCTION</scope>
    <scope>INTERACTION WITH PCNA; RAD9A; RAD9B AND TOP2A</scope>
</reference>
<reference key="14">
    <citation type="journal article" date="2010" name="Sci. Signal.">
        <title>Quantitative phosphoproteomics reveals widespread full phosphorylation site occupancy during mitosis.</title>
        <authorList>
            <person name="Olsen J.V."/>
            <person name="Vermeulen M."/>
            <person name="Santamaria A."/>
            <person name="Kumar C."/>
            <person name="Miller M.L."/>
            <person name="Jensen L.J."/>
            <person name="Gnad F."/>
            <person name="Cox J."/>
            <person name="Jensen T.S."/>
            <person name="Nigg E.A."/>
            <person name="Brunak S."/>
            <person name="Mann M."/>
        </authorList>
    </citation>
    <scope>PHOSPHORYLATION [LARGE SCALE ANALYSIS] AT SER-508</scope>
    <scope>IDENTIFICATION BY MASS SPECTROMETRY [LARGE SCALE ANALYSIS]</scope>
    <source>
        <tissue>Cervix carcinoma</tissue>
    </source>
</reference>
<reference key="15">
    <citation type="journal article" date="2011" name="Proc. Natl. Acad. Sci. U.S.A.">
        <title>Methylation of histone H3 lysine 36 enhances DNA repair by nonhomologous end-joining.</title>
        <authorList>
            <person name="Fnu S."/>
            <person name="Williamson E.A."/>
            <person name="De Haro L.P."/>
            <person name="Brenneman M."/>
            <person name="Wray J."/>
            <person name="Shaheen M."/>
            <person name="Radhakrishnan K."/>
            <person name="Lee S.H."/>
            <person name="Nickoloff J.A."/>
            <person name="Hromas R."/>
        </authorList>
    </citation>
    <scope>FUNCTION</scope>
</reference>
<reference key="16">
    <citation type="journal article" date="2011" name="Sci. Signal.">
        <title>System-wide temporal characterization of the proteome and phosphoproteome of human embryonic stem cell differentiation.</title>
        <authorList>
            <person name="Rigbolt K.T."/>
            <person name="Prokhorova T.A."/>
            <person name="Akimov V."/>
            <person name="Henningsen J."/>
            <person name="Johansen P.T."/>
            <person name="Kratchmarova I."/>
            <person name="Kassem M."/>
            <person name="Mann M."/>
            <person name="Olsen J.V."/>
            <person name="Blagoev B."/>
        </authorList>
    </citation>
    <scope>PHOSPHORYLATION [LARGE SCALE ANALYSIS] AT SER-508</scope>
    <scope>IDENTIFICATION BY MASS SPECTROMETRY [LARGE SCALE ANALYSIS]</scope>
</reference>
<reference key="17">
    <citation type="journal article" date="2012" name="Oncogene">
        <title>Chk1 phosphorylation of Metnase enhances DNA repair but inhibits replication fork restart.</title>
        <authorList>
            <person name="Hromas R."/>
            <person name="Williamson E.A."/>
            <person name="Fnu S."/>
            <person name="Lee Y.J."/>
            <person name="Park S.J."/>
            <person name="Beck B.D."/>
            <person name="You J.S."/>
            <person name="Leitao A."/>
            <person name="Laitao A."/>
            <person name="Nickoloff J.A."/>
            <person name="Lee S.H."/>
        </authorList>
    </citation>
    <scope>FUNCTION</scope>
    <scope>PHOSPHORYLATION AT SER-508 BY CHEK1</scope>
    <scope>DEPHOSPHORYLATION BY PP2A</scope>
    <scope>MUTAGENESIS OF SER-508</scope>
    <scope>SUBCELLULAR LOCATION</scope>
</reference>
<reference key="18">
    <citation type="journal article" date="2013" name="J. Proteome Res.">
        <title>Toward a comprehensive characterization of a human cancer cell phosphoproteome.</title>
        <authorList>
            <person name="Zhou H."/>
            <person name="Di Palma S."/>
            <person name="Preisinger C."/>
            <person name="Peng M."/>
            <person name="Polat A.N."/>
            <person name="Heck A.J."/>
            <person name="Mohammed S."/>
        </authorList>
    </citation>
    <scope>PHOSPHORYLATION [LARGE SCALE ANALYSIS] AT SER-508</scope>
    <scope>IDENTIFICATION BY MASS SPECTROMETRY [LARGE SCALE ANALYSIS]</scope>
    <source>
        <tissue>Cervix carcinoma</tissue>
        <tissue>Erythroleukemia</tissue>
    </source>
</reference>
<reference key="19">
    <citation type="journal article" date="2014" name="J. Biol. Chem.">
        <title>The DDN catalytic motif is required for Metnase functions in non-homologous end joining (NHEJ) repair and replication restart.</title>
        <authorList>
            <person name="Kim H.S."/>
            <person name="Chen Q."/>
            <person name="Kim S.K."/>
            <person name="Nickoloff J.A."/>
            <person name="Hromas R."/>
            <person name="Georgiadis M.M."/>
            <person name="Lee S.H."/>
        </authorList>
    </citation>
    <scope>FUNCTION</scope>
    <scope>MUTAGENESIS OF ASN-623</scope>
</reference>
<reference key="20">
    <citation type="submission" date="2009-08" db="PDB data bank">
        <title>The crystal structure of transposase domain of human histone-lysine N-methyltransferase SETMAR.</title>
        <authorList>
            <consortium name="Structural genomics consortium (SGC)"/>
        </authorList>
    </citation>
    <scope>X-RAY CRYSTALLOGRAPHY (1.59 ANGSTROMS) OF 15-303</scope>
    <scope>X-RAY CRYSTALLOGRAPHY (1.59 ANGSTROMS) OF 459-684 IN COMPLEXES WITH S-ADENOSYL-L-HOMOCYSTEINE; ZINC AND MAGNESIUM IONS</scope>
</reference>
<reference key="21">
    <citation type="journal article" date="2010" name="Biochemistry">
        <title>Crystal structure of the human Hsmar1-derived transposase domain in the DNA repair enzyme Metnase.</title>
        <authorList>
            <person name="Goodwin K.D."/>
            <person name="He H."/>
            <person name="Imasaki T."/>
            <person name="Lee S.H."/>
            <person name="Georgiadis M.M."/>
        </authorList>
    </citation>
    <scope>X-RAY CRYSTALLOGRAPHY (1.90 ANGSTROMS) OF 446-684</scope>
    <scope>FUNCTION</scope>
    <scope>SUBUNIT</scope>
    <scope>MUTAGENESIS OF PHE-473</scope>
</reference>
<organism>
    <name type="scientific">Homo sapiens</name>
    <name type="common">Human</name>
    <dbReference type="NCBI Taxonomy" id="9606"/>
    <lineage>
        <taxon>Eukaryota</taxon>
        <taxon>Metazoa</taxon>
        <taxon>Chordata</taxon>
        <taxon>Craniata</taxon>
        <taxon>Vertebrata</taxon>
        <taxon>Euteleostomi</taxon>
        <taxon>Mammalia</taxon>
        <taxon>Eutheria</taxon>
        <taxon>Euarchontoglires</taxon>
        <taxon>Primates</taxon>
        <taxon>Haplorrhini</taxon>
        <taxon>Catarrhini</taxon>
        <taxon>Hominidae</taxon>
        <taxon>Homo</taxon>
    </lineage>
</organism>
<comment type="function">
    <text evidence="5 6 7 8 10 11 12 13 14 15 19">Protein derived from the fusion of a methylase with the transposase of an Hsmar1 transposon that plays a role in DNA double-strand break repair, stalled replication fork restart and DNA integration. DNA-binding protein, it is indirectly recruited to sites of DNA damage through protein-protein interactions. Also has kept a sequence-specific DNA-binding activity recognizing the 19-mer core of the 5'-terminal inverted repeats (TIRs) of the Hsmar1 element and displays a DNA nicking and end joining activity (PubMed:16332963, PubMed:16672366, PubMed:17403897, PubMed:17877369, PubMed:18263876, PubMed:20521842, PubMed:22231448, PubMed:24573677). In parallel, has a histone methyltransferase activity and methylates 'Lys-4' and 'Lys-36' of histone H3. Specifically mediates dimethylation of H3 'Lys-36' at sites of DNA double-strand break and may recruit proteins required for efficient DSB repair through non-homologous end-joining (PubMed:16332963, PubMed:21187428, PubMed:22231448). Also regulates replication fork processing, promoting replication fork restart and regulating DNA decatenation through stimulation of the topoisomerase activity of TOP2A (PubMed:18790802, PubMed:20457750).</text>
</comment>
<comment type="catalytic activity">
    <reaction evidence="5">
        <text>L-lysyl(36)-[histone H3] + 2 S-adenosyl-L-methionine = N(6),N(6)-dimethyl-L-lysyl(36)-[histone H3] + 2 S-adenosyl-L-homocysteine + 2 H(+)</text>
        <dbReference type="Rhea" id="RHEA:60308"/>
        <dbReference type="Rhea" id="RHEA-COMP:9785"/>
        <dbReference type="Rhea" id="RHEA-COMP:9787"/>
        <dbReference type="ChEBI" id="CHEBI:15378"/>
        <dbReference type="ChEBI" id="CHEBI:29969"/>
        <dbReference type="ChEBI" id="CHEBI:57856"/>
        <dbReference type="ChEBI" id="CHEBI:59789"/>
        <dbReference type="ChEBI" id="CHEBI:61976"/>
        <dbReference type="EC" id="2.1.1.357"/>
    </reaction>
</comment>
<comment type="cofactor">
    <cofactor>
        <name>Mg(2+)</name>
        <dbReference type="ChEBI" id="CHEBI:18420"/>
    </cofactor>
    <text>Binds 1 Mg(2+) ion per subunit.</text>
</comment>
<comment type="subunit">
    <text evidence="9 10 11 12">Homodimer (PubMed:20521842). Interacts with PRPF19; required for SETMAR recruitment to damaged DNA sites (PubMed:18263876). Interacts with PCNA (PubMed:20457750). Interacts with TOP2A; stimulates TOP2A topoisomerase activity (PubMed:18790802, PubMed:20457750). May interact with RAD9A and/or RAD9B (PubMed:20457750).</text>
</comment>
<comment type="interaction">
    <interactant intactId="EBI-717125">
        <id>Q53H47</id>
    </interactant>
    <interactant intactId="EBI-10300345">
        <id>Q9BW85</id>
        <label>YJU2</label>
    </interactant>
    <organismsDiffer>false</organismsDiffer>
    <experiments>3</experiments>
</comment>
<comment type="subcellular location">
    <subcellularLocation>
        <location evidence="9">Nucleus</location>
    </subcellularLocation>
    <subcellularLocation>
        <location evidence="10 14">Chromosome</location>
    </subcellularLocation>
    <text evidence="9">Recruited on damaged DNA at sites of double-strand breaks.</text>
</comment>
<comment type="alternative products">
    <event type="alternative splicing"/>
    <isoform>
        <id>Q53H47-1</id>
        <name>1</name>
        <sequence type="displayed"/>
    </isoform>
    <isoform>
        <id>Q53H47-2</id>
        <name>2</name>
        <sequence type="described" ref="VSP_021440 VSP_021441"/>
    </isoform>
    <isoform>
        <id>Q53H47-3</id>
        <name>3</name>
        <sequence type="described" ref="VSP_054089"/>
    </isoform>
</comment>
<comment type="tissue specificity">
    <text evidence="5">Widely expressed, with highest expression in placenta and ovary and lowest expression in skeletal muscle.</text>
</comment>
<comment type="domain">
    <text evidence="7">The mariner transposase Hsmar1 region mediates DNA-binding. It has retained some of the nucleases activity but has lost its transposase activity because the active site contains an Asn in position 610 instead of an Asp residue.</text>
</comment>
<comment type="domain">
    <text>In the pre-SET domain, Cys residues bind 3 zinc ions that are arranged in a triangular cluster; some of these Cys residues contribute to the binding of two zinc ions within the cluster.</text>
</comment>
<comment type="PTM">
    <text evidence="10">Methylated. Methylation regulates activity in DNA decatenation.</text>
</comment>
<comment type="PTM">
    <text evidence="14">Phosphorylated at Ser-508 by CHEK1 and dephosphorylated by protein phosphatase 2A/PP2A. Phosphorylation at Ser-508 is enhanced by DNA damage and promotes recruitment to damaged DNA. It stimulates DNA repair and impairs replication fork restart.</text>
</comment>
<comment type="miscellaneous">
    <text>The mariner transposase region in only present in primates and appeared 40-58 million years ago, after the insertion of a transposon downstream of a preexisting SET gene, followed by the de novo exonization of previously non-coding sequence and the creation of a new intron.</text>
</comment>
<comment type="similarity">
    <text evidence="21">In the N-terminal section; belongs to the class V-like SAM-binding methyltransferase superfamily.</text>
</comment>
<comment type="similarity">
    <text evidence="21">In the C-terminal section; belongs to the mariner transposase family.</text>
</comment>
<comment type="sequence caution" evidence="21">
    <conflict type="erroneous initiation">
        <sequence resource="EMBL-CDS" id="AAH11635"/>
    </conflict>
    <text>Truncated N-terminus.</text>
</comment>
<comment type="sequence caution" evidence="21">
    <conflict type="erroneous initiation">
        <sequence resource="EMBL-CDS" id="AAY29570"/>
    </conflict>
    <text>Truncated N-terminus.</text>
</comment>
<comment type="sequence caution" evidence="21">
    <conflict type="erroneous initiation">
        <sequence resource="EMBL-CDS" id="BAD96454"/>
    </conflict>
    <text>Truncated N-terminus.</text>
</comment>
<comment type="online information" name="Protein Spotlight">
    <link uri="https://www.proteinspotlight.org/back_issues/167/"/>
    <text>Taming genes - Issue 167 of February 2015</text>
</comment>
<proteinExistence type="evidence at protein level"/>
<protein>
    <recommendedName>
        <fullName evidence="21">Histone-lysine N-methyltransferase SETMAR</fullName>
    </recommendedName>
    <alternativeName>
        <fullName evidence="21">SET domain and mariner transposase fusion protein</fullName>
        <shortName evidence="18">Metnase</shortName>
    </alternativeName>
    <domain>
        <recommendedName>
            <fullName evidence="21">Histone-lysine N-methyltransferase</fullName>
            <ecNumber evidence="5">2.1.1.357</ecNumber>
        </recommendedName>
    </domain>
    <domain>
        <recommendedName>
            <fullName evidence="20">Transposon Hsmar1 transposase</fullName>
            <ecNumber evidence="5">3.1.-.-</ecNumber>
        </recommendedName>
    </domain>
</protein>
<name>SETMR_HUMAN</name>
<evidence type="ECO:0000250" key="1"/>
<evidence type="ECO:0000255" key="2">
    <source>
        <dbReference type="PROSITE-ProRule" id="PRU00155"/>
    </source>
</evidence>
<evidence type="ECO:0000255" key="3">
    <source>
        <dbReference type="PROSITE-ProRule" id="PRU00157"/>
    </source>
</evidence>
<evidence type="ECO:0000255" key="4">
    <source>
        <dbReference type="PROSITE-ProRule" id="PRU00190"/>
    </source>
</evidence>
<evidence type="ECO:0000269" key="5">
    <source>
    </source>
</evidence>
<evidence type="ECO:0000269" key="6">
    <source>
    </source>
</evidence>
<evidence type="ECO:0000269" key="7">
    <source>
    </source>
</evidence>
<evidence type="ECO:0000269" key="8">
    <source>
    </source>
</evidence>
<evidence type="ECO:0000269" key="9">
    <source>
    </source>
</evidence>
<evidence type="ECO:0000269" key="10">
    <source>
    </source>
</evidence>
<evidence type="ECO:0000269" key="11">
    <source>
    </source>
</evidence>
<evidence type="ECO:0000269" key="12">
    <source>
    </source>
</evidence>
<evidence type="ECO:0000269" key="13">
    <source>
    </source>
</evidence>
<evidence type="ECO:0000269" key="14">
    <source>
    </source>
</evidence>
<evidence type="ECO:0000269" key="15">
    <source>
    </source>
</evidence>
<evidence type="ECO:0000303" key="16">
    <source>
    </source>
</evidence>
<evidence type="ECO:0000303" key="17">
    <source>
    </source>
</evidence>
<evidence type="ECO:0000303" key="18">
    <source>
    </source>
</evidence>
<evidence type="ECO:0000303" key="19">
    <source>
    </source>
</evidence>
<evidence type="ECO:0000303" key="20">
    <source>
    </source>
</evidence>
<evidence type="ECO:0000305" key="21"/>
<evidence type="ECO:0000312" key="22">
    <source>
        <dbReference type="HGNC" id="HGNC:10762"/>
    </source>
</evidence>
<evidence type="ECO:0007744" key="23">
    <source>
    </source>
</evidence>
<evidence type="ECO:0007744" key="24">
    <source>
    </source>
</evidence>
<evidence type="ECO:0007744" key="25">
    <source>
    </source>
</evidence>
<evidence type="ECO:0007744" key="26">
    <source>
    </source>
</evidence>
<evidence type="ECO:0007829" key="27">
    <source>
        <dbReference type="PDB" id="3BO5"/>
    </source>
</evidence>
<evidence type="ECO:0007829" key="28">
    <source>
        <dbReference type="PDB" id="3F2K"/>
    </source>
</evidence>
<evidence type="ECO:0007829" key="29">
    <source>
        <dbReference type="PDB" id="3K9J"/>
    </source>
</evidence>
<evidence type="ECO:0007829" key="30">
    <source>
        <dbReference type="PDB" id="7S03"/>
    </source>
</evidence>
<feature type="chain" id="PRO_0000259526" description="Histone-lysine N-methyltransferase SETMAR">
    <location>
        <begin position="1"/>
        <end position="684"/>
    </location>
</feature>
<feature type="domain" description="Pre-SET" evidence="3">
    <location>
        <begin position="73"/>
        <end position="136"/>
    </location>
</feature>
<feature type="domain" description="SET" evidence="4">
    <location>
        <begin position="139"/>
        <end position="263"/>
    </location>
</feature>
<feature type="domain" description="Post-SET" evidence="2">
    <location>
        <begin position="283"/>
        <end position="299"/>
    </location>
</feature>
<feature type="DNA-binding region" description="H-T-H motif" evidence="1">
    <location>
        <begin position="364"/>
        <end position="395"/>
    </location>
</feature>
<feature type="DNA-binding region" description="H-T-H motif">
    <location>
        <begin position="428"/>
        <end position="448"/>
    </location>
</feature>
<feature type="region of interest" description="Histone-lysine N-methyltransferase">
    <location>
        <begin position="1"/>
        <end position="345"/>
    </location>
</feature>
<feature type="region of interest" description="Mariner transposase Hsmar1">
    <location>
        <begin position="346"/>
        <end position="684"/>
    </location>
</feature>
<feature type="binding site">
    <location>
        <position position="75"/>
    </location>
    <ligand>
        <name>Zn(2+)</name>
        <dbReference type="ChEBI" id="CHEBI:29105"/>
        <label>1</label>
    </ligand>
</feature>
<feature type="binding site">
    <location>
        <position position="75"/>
    </location>
    <ligand>
        <name>Zn(2+)</name>
        <dbReference type="ChEBI" id="CHEBI:29105"/>
        <label>2</label>
    </ligand>
</feature>
<feature type="binding site">
    <location>
        <position position="77"/>
    </location>
    <ligand>
        <name>Zn(2+)</name>
        <dbReference type="ChEBI" id="CHEBI:29105"/>
        <label>1</label>
    </ligand>
</feature>
<feature type="binding site">
    <location>
        <position position="82"/>
    </location>
    <ligand>
        <name>Zn(2+)</name>
        <dbReference type="ChEBI" id="CHEBI:29105"/>
        <label>1</label>
    </ligand>
</feature>
<feature type="binding site">
    <location>
        <position position="82"/>
    </location>
    <ligand>
        <name>Zn(2+)</name>
        <dbReference type="ChEBI" id="CHEBI:29105"/>
        <label>3</label>
    </ligand>
</feature>
<feature type="binding site">
    <location>
        <position position="87"/>
    </location>
    <ligand>
        <name>Zn(2+)</name>
        <dbReference type="ChEBI" id="CHEBI:29105"/>
        <label>1</label>
    </ligand>
</feature>
<feature type="binding site">
    <location>
        <position position="89"/>
    </location>
    <ligand>
        <name>Zn(2+)</name>
        <dbReference type="ChEBI" id="CHEBI:29105"/>
        <label>2</label>
    </ligand>
</feature>
<feature type="binding site">
    <location>
        <position position="118"/>
    </location>
    <ligand>
        <name>Zn(2+)</name>
        <dbReference type="ChEBI" id="CHEBI:29105"/>
        <label>2</label>
    </ligand>
</feature>
<feature type="binding site">
    <location>
        <position position="118"/>
    </location>
    <ligand>
        <name>Zn(2+)</name>
        <dbReference type="ChEBI" id="CHEBI:29105"/>
        <label>3</label>
    </ligand>
</feature>
<feature type="binding site">
    <location>
        <position position="122"/>
    </location>
    <ligand>
        <name>Zn(2+)</name>
        <dbReference type="ChEBI" id="CHEBI:29105"/>
        <label>2</label>
    </ligand>
</feature>
<feature type="binding site">
    <location>
        <position position="124"/>
    </location>
    <ligand>
        <name>Zn(2+)</name>
        <dbReference type="ChEBI" id="CHEBI:29105"/>
        <label>3</label>
    </ligand>
</feature>
<feature type="binding site">
    <location>
        <position position="128"/>
    </location>
    <ligand>
        <name>Zn(2+)</name>
        <dbReference type="ChEBI" id="CHEBI:29105"/>
        <label>3</label>
    </ligand>
</feature>
<feature type="binding site">
    <location>
        <begin position="149"/>
        <end position="151"/>
    </location>
    <ligand>
        <name>S-adenosyl-L-methionine</name>
        <dbReference type="ChEBI" id="CHEBI:59789"/>
    </ligand>
</feature>
<feature type="binding site">
    <location>
        <position position="192"/>
    </location>
    <ligand>
        <name>S-adenosyl-L-methionine</name>
        <dbReference type="ChEBI" id="CHEBI:59789"/>
    </ligand>
</feature>
<feature type="binding site" evidence="4">
    <location>
        <position position="220"/>
    </location>
    <ligand>
        <name>S-adenosyl-L-methionine</name>
        <dbReference type="ChEBI" id="CHEBI:59789"/>
    </ligand>
</feature>
<feature type="binding site">
    <location>
        <begin position="223"/>
        <end position="224"/>
    </location>
    <ligand>
        <name>S-adenosyl-L-methionine</name>
        <dbReference type="ChEBI" id="CHEBI:59789"/>
    </ligand>
</feature>
<feature type="binding site">
    <location>
        <position position="226"/>
    </location>
    <ligand>
        <name>Zn(2+)</name>
        <dbReference type="ChEBI" id="CHEBI:29105"/>
        <label>4</label>
    </ligand>
</feature>
<feature type="binding site">
    <location>
        <position position="287"/>
    </location>
    <ligand>
        <name>Zn(2+)</name>
        <dbReference type="ChEBI" id="CHEBI:29105"/>
        <label>4</label>
    </ligand>
</feature>
<feature type="binding site">
    <location>
        <position position="289"/>
    </location>
    <ligand>
        <name>Zn(2+)</name>
        <dbReference type="ChEBI" id="CHEBI:29105"/>
        <label>4</label>
    </ligand>
</feature>
<feature type="binding site">
    <location>
        <position position="294"/>
    </location>
    <ligand>
        <name>Zn(2+)</name>
        <dbReference type="ChEBI" id="CHEBI:29105"/>
        <label>4</label>
    </ligand>
</feature>
<feature type="binding site">
    <location>
        <position position="496"/>
    </location>
    <ligand>
        <name>Mg(2+)</name>
        <dbReference type="ChEBI" id="CHEBI:18420"/>
    </ligand>
</feature>
<feature type="binding site">
    <location>
        <position position="588"/>
    </location>
    <ligand>
        <name>Mg(2+)</name>
        <dbReference type="ChEBI" id="CHEBI:18420"/>
    </ligand>
</feature>
<feature type="modified residue" description="N6-methyllysine" evidence="10">
    <location>
        <position position="498"/>
    </location>
</feature>
<feature type="modified residue" description="Phosphoserine; by CHEK1" evidence="14 23 24 25 26">
    <location>
        <position position="508"/>
    </location>
</feature>
<feature type="splice variant" id="VSP_054089" description="In isoform 3." evidence="21">
    <location>
        <begin position="163"/>
        <end position="301"/>
    </location>
</feature>
<feature type="splice variant" id="VSP_021440" description="In isoform 2." evidence="16 17">
    <original>TMKMMLDKKQIRAIFLFEFKMGRKA</original>
    <variation>VSLFSDKQLAPPYSGRQWLASFTSA</variation>
    <location>
        <begin position="341"/>
        <end position="365"/>
    </location>
</feature>
<feature type="splice variant" id="VSP_021441" description="In isoform 2." evidence="16 17">
    <location>
        <begin position="366"/>
        <end position="684"/>
    </location>
</feature>
<feature type="mutagenesis site" description="Reduces activity in double-strand break repair." evidence="5">
    <original>N</original>
    <variation>S</variation>
    <location>
        <position position="223"/>
    </location>
</feature>
<feature type="mutagenesis site" description="Reduces activity in double-strand break repair." evidence="5">
    <original>D</original>
    <variation>S</variation>
    <location>
        <position position="261"/>
    </location>
</feature>
<feature type="mutagenesis site" description="Abolishes TIR-specific DNA-binding." evidence="8">
    <original>R</original>
    <variation>A</variation>
    <location>
        <position position="445"/>
    </location>
</feature>
<feature type="mutagenesis site" description="Abolishes homodimerization and DNA-binding and reduces cleavage of single-stranded DNA." evidence="12">
    <original>F</original>
    <variation>K</variation>
    <location>
        <position position="473"/>
    </location>
</feature>
<feature type="mutagenesis site" description="Abolishes DNA cleavage." evidence="8">
    <original>D</original>
    <variation>A</variation>
    <location>
        <position position="496"/>
    </location>
</feature>
<feature type="mutagenesis site" description="Reduces activity in double-strand break repair." evidence="5">
    <original>D</original>
    <variation>S</variation>
    <location>
        <position position="503"/>
    </location>
</feature>
<feature type="mutagenesis site" description="Prevents phosphorylation. Impairs recruitment to damaged DNA and double-strand break repair. Impairs interaction with histone H3 and its methylation. Allows replication fork restart." evidence="14">
    <original>S</original>
    <variation>A</variation>
    <location>
        <position position="508"/>
    </location>
</feature>
<feature type="mutagenesis site" description="Loss of function in DNA repair. Altered DNA-binding properties." evidence="15">
    <original>N</original>
    <variation>D</variation>
    <variation>E</variation>
    <location>
        <position position="623"/>
    </location>
</feature>
<feature type="sequence conflict" description="In Ref. 1; BAG63636." evidence="21" ref="1">
    <original>R</original>
    <variation>H</variation>
    <location>
        <position position="91"/>
    </location>
</feature>
<feature type="sequence conflict" description="In Ref. 6; AAC52010." evidence="21" ref="6">
    <original>K</original>
    <variation>E</variation>
    <location>
        <position position="343"/>
    </location>
</feature>
<feature type="sequence conflict" description="In Ref. 6; AAC52010." evidence="21" ref="6">
    <original>N</original>
    <variation>D</variation>
    <location>
        <position position="439"/>
    </location>
</feature>
<feature type="sequence conflict" description="In Ref. 6; AAC52010." evidence="21" ref="6">
    <original>T</original>
    <variation>S</variation>
    <location>
        <position position="465"/>
    </location>
</feature>
<feature type="sequence conflict" description="In Ref. 6; AAC52010." evidence="21" ref="6">
    <original>H</original>
    <variation>N</variation>
    <location>
        <position position="484"/>
    </location>
</feature>
<feature type="sequence conflict" description="In Ref. 6; AAC52010." evidence="21" ref="6">
    <original>S</original>
    <variation>P</variation>
    <location>
        <position position="508"/>
    </location>
</feature>
<feature type="sequence conflict" description="In Ref. 6; AAC52010." evidence="21" ref="6">
    <original>Q</original>
    <variation>R</variation>
    <location>
        <position position="514"/>
    </location>
</feature>
<feature type="sequence conflict" description="In Ref. 6; AAC52010." evidence="21" ref="6">
    <original>I</original>
    <variation>N</variation>
    <location>
        <position position="525"/>
    </location>
</feature>
<feature type="sequence conflict" description="In Ref. 6; AAC52010." evidence="21" ref="6">
    <original>P</original>
    <variation>Q</variation>
    <location>
        <position position="528"/>
    </location>
</feature>
<feature type="sequence conflict" description="In Ref. 6; AAC52010." evidence="21" ref="6">
    <original>I</original>
    <variation>V</variation>
    <location>
        <position position="535"/>
    </location>
</feature>
<feature type="sequence conflict" description="In Ref. 6; AAC52010." evidence="21" ref="6">
    <original>E</original>
    <variation>Q</variation>
    <location>
        <position position="562"/>
    </location>
</feature>
<feature type="sequence conflict" description="In Ref. 6; AAC52010." evidence="21" ref="6">
    <original>NQ</original>
    <variation>HR</variation>
    <location>
        <begin position="567"/>
        <end position="568"/>
    </location>
</feature>
<feature type="sequence conflict" description="In Ref. 6; AAC52010." evidence="21" ref="6">
    <original>L</original>
    <variation>P</variation>
    <location>
        <position position="575"/>
    </location>
</feature>
<feature type="sequence conflict" description="In Ref. 6; AAC52010." evidence="21" ref="6">
    <original>L</original>
    <variation>S</variation>
    <location>
        <position position="620"/>
    </location>
</feature>
<feature type="sequence conflict" description="In Ref. 6; AAC52010." evidence="21" ref="6">
    <original>N</original>
    <variation>D</variation>
    <location>
        <position position="623"/>
    </location>
</feature>
<feature type="sequence conflict" description="In Ref. 6; AAC52010." evidence="21" ref="6">
    <original>V</original>
    <variation>F</variation>
    <location>
        <position position="626"/>
    </location>
</feature>
<feature type="sequence conflict" description="In Ref. 6; AAC52010." evidence="21" ref="6">
    <original>N</original>
    <variation>D</variation>
    <location>
        <position position="631"/>
    </location>
</feature>
<feature type="sequence conflict" description="In Ref. 6; AAC52010." evidence="21" ref="6">
    <original>Q</original>
    <variation>R</variation>
    <location>
        <position position="656"/>
    </location>
</feature>
<feature type="sequence conflict" description="In Ref. 6; AAC52010." evidence="21" ref="6">
    <original>Q</original>
    <variation>K</variation>
    <location>
        <position position="667"/>
    </location>
</feature>
<feature type="turn" evidence="27">
    <location>
        <begin position="30"/>
        <end position="33"/>
    </location>
</feature>
<feature type="strand" evidence="27">
    <location>
        <begin position="35"/>
        <end position="37"/>
    </location>
</feature>
<feature type="strand" evidence="27">
    <location>
        <begin position="40"/>
        <end position="43"/>
    </location>
</feature>
<feature type="turn" evidence="27">
    <location>
        <begin position="84"/>
        <end position="86"/>
    </location>
</feature>
<feature type="helix" evidence="27">
    <location>
        <begin position="88"/>
        <end position="90"/>
    </location>
</feature>
<feature type="helix" evidence="27">
    <location>
        <begin position="133"/>
        <end position="135"/>
    </location>
</feature>
<feature type="strand" evidence="27">
    <location>
        <begin position="141"/>
        <end position="145"/>
    </location>
</feature>
<feature type="strand" evidence="27">
    <location>
        <begin position="147"/>
        <end position="157"/>
    </location>
</feature>
<feature type="strand" evidence="27">
    <location>
        <begin position="164"/>
        <end position="167"/>
    </location>
</feature>
<feature type="strand" evidence="27">
    <location>
        <begin position="170"/>
        <end position="173"/>
    </location>
</feature>
<feature type="helix" evidence="27">
    <location>
        <begin position="175"/>
        <end position="182"/>
    </location>
</feature>
<feature type="strand" evidence="27">
    <location>
        <begin position="194"/>
        <end position="198"/>
    </location>
</feature>
<feature type="strand" evidence="27">
    <location>
        <begin position="206"/>
        <end position="216"/>
    </location>
</feature>
<feature type="helix" evidence="27">
    <location>
        <begin position="218"/>
        <end position="221"/>
    </location>
</feature>
<feature type="strand" evidence="27">
    <location>
        <begin position="229"/>
        <end position="241"/>
    </location>
</feature>
<feature type="strand" evidence="27">
    <location>
        <begin position="243"/>
        <end position="250"/>
    </location>
</feature>
<feature type="strand" evidence="27">
    <location>
        <begin position="257"/>
        <end position="260"/>
    </location>
</feature>
<feature type="strand" evidence="27">
    <location>
        <begin position="270"/>
        <end position="279"/>
    </location>
</feature>
<feature type="helix" evidence="30">
    <location>
        <begin position="348"/>
        <end position="360"/>
    </location>
</feature>
<feature type="helix" evidence="30">
    <location>
        <begin position="365"/>
        <end position="376"/>
    </location>
</feature>
<feature type="helix" evidence="30">
    <location>
        <begin position="383"/>
        <end position="394"/>
    </location>
</feature>
<feature type="helix" evidence="30">
    <location>
        <begin position="414"/>
        <end position="423"/>
    </location>
</feature>
<feature type="helix" evidence="30">
    <location>
        <begin position="429"/>
        <end position="436"/>
    </location>
</feature>
<feature type="helix" evidence="30">
    <location>
        <begin position="440"/>
        <end position="449"/>
    </location>
</feature>
<feature type="helix" evidence="28">
    <location>
        <begin position="466"/>
        <end position="485"/>
    </location>
</feature>
<feature type="helix" evidence="28">
    <location>
        <begin position="489"/>
        <end position="491"/>
    </location>
</feature>
<feature type="strand" evidence="28">
    <location>
        <begin position="492"/>
        <end position="503"/>
    </location>
</feature>
<feature type="strand" evidence="28">
    <location>
        <begin position="530"/>
        <end position="538"/>
    </location>
</feature>
<feature type="strand" evidence="28">
    <location>
        <begin position="541"/>
        <end position="547"/>
    </location>
</feature>
<feature type="helix" evidence="28">
    <location>
        <begin position="556"/>
        <end position="573"/>
    </location>
</feature>
<feature type="helix" evidence="29">
    <location>
        <begin position="574"/>
        <end position="576"/>
    </location>
</feature>
<feature type="strand" evidence="28">
    <location>
        <begin position="584"/>
        <end position="586"/>
    </location>
</feature>
<feature type="helix" evidence="28">
    <location>
        <begin position="591"/>
        <end position="594"/>
    </location>
</feature>
<feature type="helix" evidence="28">
    <location>
        <begin position="598"/>
        <end position="605"/>
    </location>
</feature>
<feature type="helix" evidence="28">
    <location>
        <begin position="617"/>
        <end position="619"/>
    </location>
</feature>
<feature type="helix" evidence="28">
    <location>
        <begin position="621"/>
        <end position="624"/>
    </location>
</feature>
<feature type="helix" evidence="28">
    <location>
        <begin position="626"/>
        <end position="634"/>
    </location>
</feature>
<feature type="helix" evidence="28">
    <location>
        <begin position="642"/>
        <end position="654"/>
    </location>
</feature>
<feature type="helix" evidence="28">
    <location>
        <begin position="660"/>
        <end position="666"/>
    </location>
</feature>
<feature type="helix" evidence="28">
    <location>
        <begin position="668"/>
        <end position="677"/>
    </location>
</feature>
<feature type="turn" evidence="28">
    <location>
        <begin position="678"/>
        <end position="680"/>
    </location>
</feature>
<dbReference type="EC" id="2.1.1.357" evidence="5"/>
<dbReference type="EC" id="3.1.-.-" evidence="5"/>
<dbReference type="EMBL" id="AK222734">
    <property type="protein sequence ID" value="BAD96454.1"/>
    <property type="status" value="ALT_INIT"/>
    <property type="molecule type" value="mRNA"/>
</dbReference>
<dbReference type="EMBL" id="AK302296">
    <property type="protein sequence ID" value="BAG63636.1"/>
    <property type="molecule type" value="mRNA"/>
</dbReference>
<dbReference type="EMBL" id="AC023483">
    <property type="status" value="NOT_ANNOTATED_CDS"/>
    <property type="molecule type" value="Genomic_DNA"/>
</dbReference>
<dbReference type="EMBL" id="AC034191">
    <property type="status" value="NOT_ANNOTATED_CDS"/>
    <property type="molecule type" value="Genomic_DNA"/>
</dbReference>
<dbReference type="EMBL" id="BC011635">
    <property type="protein sequence ID" value="AAH11635.1"/>
    <property type="status" value="ALT_INIT"/>
    <property type="molecule type" value="mRNA"/>
</dbReference>
<dbReference type="EMBL" id="AY952295">
    <property type="protein sequence ID" value="AAY29570.1"/>
    <property type="status" value="ALT_INIT"/>
    <property type="molecule type" value="mRNA"/>
</dbReference>
<dbReference type="EMBL" id="DQ341316">
    <property type="protein sequence ID" value="ABC72087.1"/>
    <property type="molecule type" value="Genomic_DNA"/>
</dbReference>
<dbReference type="EMBL" id="U52077">
    <property type="protein sequence ID" value="AAC52010.1"/>
    <property type="molecule type" value="Genomic_DNA"/>
</dbReference>
<dbReference type="CCDS" id="CCDS2563.2">
    <molecule id="Q53H47-1"/>
</dbReference>
<dbReference type="CCDS" id="CCDS58814.1">
    <molecule id="Q53H47-3"/>
</dbReference>
<dbReference type="CCDS" id="CCDS63528.1">
    <molecule id="Q53H47-2"/>
</dbReference>
<dbReference type="RefSeq" id="NP_001230652.1">
    <molecule id="Q53H47-3"/>
    <property type="nucleotide sequence ID" value="NM_001243723.2"/>
</dbReference>
<dbReference type="RefSeq" id="NP_001263254.1">
    <molecule id="Q53H47-2"/>
    <property type="nucleotide sequence ID" value="NM_001276325.2"/>
</dbReference>
<dbReference type="RefSeq" id="NP_001307606.1">
    <property type="nucleotide sequence ID" value="NM_001320677.1"/>
</dbReference>
<dbReference type="RefSeq" id="NP_001307607.1">
    <property type="nucleotide sequence ID" value="NM_001320678.1"/>
</dbReference>
<dbReference type="RefSeq" id="NP_006506.3">
    <molecule id="Q53H47-1"/>
    <property type="nucleotide sequence ID" value="NM_006515.4"/>
</dbReference>
<dbReference type="PDB" id="3BO5">
    <property type="method" value="X-ray"/>
    <property type="resolution" value="1.59 A"/>
    <property type="chains" value="A=15-303"/>
</dbReference>
<dbReference type="PDB" id="3F2K">
    <property type="method" value="X-ray"/>
    <property type="resolution" value="1.85 A"/>
    <property type="chains" value="A/B=459-684"/>
</dbReference>
<dbReference type="PDB" id="3K9J">
    <property type="method" value="X-ray"/>
    <property type="resolution" value="1.90 A"/>
    <property type="chains" value="A/B=446-684"/>
</dbReference>
<dbReference type="PDB" id="3K9K">
    <property type="method" value="X-ray"/>
    <property type="resolution" value="2.55 A"/>
    <property type="chains" value="A/B=446-684"/>
</dbReference>
<dbReference type="PDB" id="7S03">
    <property type="method" value="X-ray"/>
    <property type="resolution" value="2.37 A"/>
    <property type="chains" value="A=343-453"/>
</dbReference>
<dbReference type="PDBsum" id="3BO5"/>
<dbReference type="PDBsum" id="3F2K"/>
<dbReference type="PDBsum" id="3K9J"/>
<dbReference type="PDBsum" id="3K9K"/>
<dbReference type="PDBsum" id="7S03"/>
<dbReference type="SMR" id="Q53H47"/>
<dbReference type="BioGRID" id="112317">
    <property type="interactions" value="26"/>
</dbReference>
<dbReference type="CORUM" id="Q53H47"/>
<dbReference type="FunCoup" id="Q53H47">
    <property type="interactions" value="246"/>
</dbReference>
<dbReference type="IntAct" id="Q53H47">
    <property type="interactions" value="18"/>
</dbReference>
<dbReference type="MINT" id="Q53H47"/>
<dbReference type="STRING" id="9606.ENSP00000373354"/>
<dbReference type="BindingDB" id="Q53H47"/>
<dbReference type="ChEMBL" id="CHEMBL2189111"/>
<dbReference type="GlyGen" id="Q53H47">
    <property type="glycosylation" value="2 sites, 1 O-linked glycan (2 sites)"/>
</dbReference>
<dbReference type="iPTMnet" id="Q53H47"/>
<dbReference type="PhosphoSitePlus" id="Q53H47"/>
<dbReference type="BioMuta" id="SETMAR"/>
<dbReference type="DMDM" id="74740552"/>
<dbReference type="jPOST" id="Q53H47"/>
<dbReference type="MassIVE" id="Q53H47"/>
<dbReference type="PaxDb" id="9606-ENSP00000373354"/>
<dbReference type="PeptideAtlas" id="Q53H47"/>
<dbReference type="ProteomicsDB" id="17093"/>
<dbReference type="ProteomicsDB" id="62493">
    <molecule id="Q53H47-1"/>
</dbReference>
<dbReference type="ProteomicsDB" id="62494">
    <molecule id="Q53H47-2"/>
</dbReference>
<dbReference type="Pumba" id="Q53H47"/>
<dbReference type="ABCD" id="Q53H47">
    <property type="antibodies" value="1 sequenced antibody"/>
</dbReference>
<dbReference type="Antibodypedia" id="25143">
    <property type="antibodies" value="181 antibodies from 32 providers"/>
</dbReference>
<dbReference type="DNASU" id="6419"/>
<dbReference type="Ensembl" id="ENST00000358065.5">
    <molecule id="Q53H47-1"/>
    <property type="protein sequence ID" value="ENSP00000373354.3"/>
    <property type="gene ID" value="ENSG00000170364.13"/>
</dbReference>
<dbReference type="Ensembl" id="ENST00000425863.5">
    <molecule id="Q53H47-3"/>
    <property type="protein sequence ID" value="ENSP00000403145.1"/>
    <property type="gene ID" value="ENSG00000170364.13"/>
</dbReference>
<dbReference type="Ensembl" id="ENST00000430981.1">
    <molecule id="Q53H47-2"/>
    <property type="protein sequence ID" value="ENSP00000403000.1"/>
    <property type="gene ID" value="ENSG00000170364.13"/>
</dbReference>
<dbReference type="GeneID" id="6419"/>
<dbReference type="KEGG" id="hsa:6419"/>
<dbReference type="MANE-Select" id="ENST00000358065.5">
    <property type="protein sequence ID" value="ENSP00000373354.3"/>
    <property type="RefSeq nucleotide sequence ID" value="NM_006515.4"/>
    <property type="RefSeq protein sequence ID" value="NP_006506.3"/>
</dbReference>
<dbReference type="UCSC" id="uc003bpw.6">
    <molecule id="Q53H47-1"/>
    <property type="organism name" value="human"/>
</dbReference>
<dbReference type="AGR" id="HGNC:10762"/>
<dbReference type="CTD" id="6419"/>
<dbReference type="DisGeNET" id="6419"/>
<dbReference type="GeneCards" id="SETMAR"/>
<dbReference type="HGNC" id="HGNC:10762">
    <property type="gene designation" value="SETMAR"/>
</dbReference>
<dbReference type="HPA" id="ENSG00000170364">
    <property type="expression patterns" value="Low tissue specificity"/>
</dbReference>
<dbReference type="MIM" id="609834">
    <property type="type" value="gene"/>
</dbReference>
<dbReference type="neXtProt" id="NX_Q53H47"/>
<dbReference type="OpenTargets" id="ENSG00000170364"/>
<dbReference type="PharmGKB" id="PA35680"/>
<dbReference type="VEuPathDB" id="HostDB:ENSG00000170364"/>
<dbReference type="eggNOG" id="KOG1082">
    <property type="taxonomic scope" value="Eukaryota"/>
</dbReference>
<dbReference type="GeneTree" id="ENSGT00440000033232"/>
<dbReference type="HOGENOM" id="CLU_020840_3_3_1"/>
<dbReference type="InParanoid" id="Q53H47"/>
<dbReference type="OMA" id="TCHEKWI"/>
<dbReference type="OrthoDB" id="616263at2759"/>
<dbReference type="PAN-GO" id="Q53H47">
    <property type="GO annotations" value="16 GO annotations based on evolutionary models"/>
</dbReference>
<dbReference type="PhylomeDB" id="Q53H47"/>
<dbReference type="TreeFam" id="TF352220"/>
<dbReference type="BioCyc" id="MetaCyc:HS10111-MONOMER"/>
<dbReference type="BRENDA" id="2.1.1.357">
    <property type="organism ID" value="2681"/>
</dbReference>
<dbReference type="BRENDA" id="2.7.7.B22">
    <property type="organism ID" value="2681"/>
</dbReference>
<dbReference type="PathwayCommons" id="Q53H47"/>
<dbReference type="SignaLink" id="Q53H47"/>
<dbReference type="SIGNOR" id="Q53H47"/>
<dbReference type="BioGRID-ORCS" id="6419">
    <property type="hits" value="14 hits in 1169 CRISPR screens"/>
</dbReference>
<dbReference type="EvolutionaryTrace" id="Q53H47"/>
<dbReference type="GeneWiki" id="SETMAR"/>
<dbReference type="GenomeRNAi" id="6419"/>
<dbReference type="Pharos" id="Q53H47">
    <property type="development level" value="Tbio"/>
</dbReference>
<dbReference type="PRO" id="PR:Q53H47"/>
<dbReference type="Proteomes" id="UP000005640">
    <property type="component" value="Chromosome 3"/>
</dbReference>
<dbReference type="RNAct" id="Q53H47">
    <property type="molecule type" value="protein"/>
</dbReference>
<dbReference type="Bgee" id="ENSG00000170364">
    <property type="expression patterns" value="Expressed in body of uterus and 168 other cell types or tissues"/>
</dbReference>
<dbReference type="ExpressionAtlas" id="Q53H47">
    <property type="expression patterns" value="baseline and differential"/>
</dbReference>
<dbReference type="GO" id="GO:0005730">
    <property type="term" value="C:nucleolus"/>
    <property type="evidence" value="ECO:0000314"/>
    <property type="project" value="HPA"/>
</dbReference>
<dbReference type="GO" id="GO:0005634">
    <property type="term" value="C:nucleus"/>
    <property type="evidence" value="ECO:0000314"/>
    <property type="project" value="UniProtKB"/>
</dbReference>
<dbReference type="GO" id="GO:0035861">
    <property type="term" value="C:site of double-strand break"/>
    <property type="evidence" value="ECO:0000314"/>
    <property type="project" value="UniProtKB"/>
</dbReference>
<dbReference type="GO" id="GO:0003677">
    <property type="term" value="F:DNA binding"/>
    <property type="evidence" value="ECO:0000314"/>
    <property type="project" value="UniProtKB"/>
</dbReference>
<dbReference type="GO" id="GO:0044547">
    <property type="term" value="F:DNA topoisomerase binding"/>
    <property type="evidence" value="ECO:0000353"/>
    <property type="project" value="UniProtKB"/>
</dbReference>
<dbReference type="GO" id="GO:0003690">
    <property type="term" value="F:double-stranded DNA binding"/>
    <property type="evidence" value="ECO:0000315"/>
    <property type="project" value="UniProtKB"/>
</dbReference>
<dbReference type="GO" id="GO:0004519">
    <property type="term" value="F:endonuclease activity"/>
    <property type="evidence" value="ECO:0000314"/>
    <property type="project" value="UniProtKB"/>
</dbReference>
<dbReference type="GO" id="GO:0140954">
    <property type="term" value="F:histone H3K36 dimethyltransferase activity"/>
    <property type="evidence" value="ECO:0000314"/>
    <property type="project" value="UniProtKB"/>
</dbReference>
<dbReference type="GO" id="GO:0046975">
    <property type="term" value="F:histone H3K36 methyltransferase activity"/>
    <property type="evidence" value="ECO:0000315"/>
    <property type="project" value="UniProtKB"/>
</dbReference>
<dbReference type="GO" id="GO:0042800">
    <property type="term" value="F:histone H3K4 methyltransferase activity"/>
    <property type="evidence" value="ECO:0000314"/>
    <property type="project" value="UniProtKB"/>
</dbReference>
<dbReference type="GO" id="GO:0042803">
    <property type="term" value="F:protein homodimerization activity"/>
    <property type="evidence" value="ECO:0000353"/>
    <property type="project" value="UniProtKB"/>
</dbReference>
<dbReference type="GO" id="GO:0003697">
    <property type="term" value="F:single-stranded DNA binding"/>
    <property type="evidence" value="ECO:0000315"/>
    <property type="project" value="UniProtKB"/>
</dbReference>
<dbReference type="GO" id="GO:0000014">
    <property type="term" value="F:single-stranded DNA endodeoxyribonuclease activity"/>
    <property type="evidence" value="ECO:0000314"/>
    <property type="project" value="UniProtKB"/>
</dbReference>
<dbReference type="GO" id="GO:0008270">
    <property type="term" value="F:zinc ion binding"/>
    <property type="evidence" value="ECO:0007669"/>
    <property type="project" value="InterPro"/>
</dbReference>
<dbReference type="GO" id="GO:0008283">
    <property type="term" value="P:cell population proliferation"/>
    <property type="evidence" value="ECO:0000315"/>
    <property type="project" value="UniProtKB"/>
</dbReference>
<dbReference type="GO" id="GO:0006308">
    <property type="term" value="P:DNA catabolic process"/>
    <property type="evidence" value="ECO:0000314"/>
    <property type="project" value="UniProtKB"/>
</dbReference>
<dbReference type="GO" id="GO:0000729">
    <property type="term" value="P:DNA double-strand break processing"/>
    <property type="evidence" value="ECO:0000314"/>
    <property type="project" value="UniProtKB"/>
</dbReference>
<dbReference type="GO" id="GO:0015074">
    <property type="term" value="P:DNA integration"/>
    <property type="evidence" value="ECO:0000315"/>
    <property type="project" value="UniProtKB"/>
</dbReference>
<dbReference type="GO" id="GO:0006303">
    <property type="term" value="P:double-strand break repair via nonhomologous end joining"/>
    <property type="evidence" value="ECO:0000314"/>
    <property type="project" value="UniProtKB"/>
</dbReference>
<dbReference type="GO" id="GO:0032259">
    <property type="term" value="P:methylation"/>
    <property type="evidence" value="ECO:0007669"/>
    <property type="project" value="UniProtKB-KW"/>
</dbReference>
<dbReference type="GO" id="GO:0044774">
    <property type="term" value="P:mitotic DNA integrity checkpoint signaling"/>
    <property type="evidence" value="ECO:0000315"/>
    <property type="project" value="UniProtKB"/>
</dbReference>
<dbReference type="GO" id="GO:2001251">
    <property type="term" value="P:negative regulation of chromosome organization"/>
    <property type="evidence" value="ECO:0000314"/>
    <property type="project" value="UniProtKB"/>
</dbReference>
<dbReference type="GO" id="GO:0090304">
    <property type="term" value="P:nucleic acid metabolic process"/>
    <property type="evidence" value="ECO:0000315"/>
    <property type="project" value="UniProtKB"/>
</dbReference>
<dbReference type="GO" id="GO:2000373">
    <property type="term" value="P:positive regulation of DNA topoisomerase (ATP-hydrolyzing) activity"/>
    <property type="evidence" value="ECO:0000314"/>
    <property type="project" value="UniProtKB"/>
</dbReference>
<dbReference type="GO" id="GO:2001034">
    <property type="term" value="P:positive regulation of double-strand break repair via nonhomologous end joining"/>
    <property type="evidence" value="ECO:0000314"/>
    <property type="project" value="UniProtKB"/>
</dbReference>
<dbReference type="GO" id="GO:0031297">
    <property type="term" value="P:replication fork processing"/>
    <property type="evidence" value="ECO:0000315"/>
    <property type="project" value="UniProtKB"/>
</dbReference>
<dbReference type="CDD" id="cd10544">
    <property type="entry name" value="SET_SETMAR"/>
    <property type="match status" value="1"/>
</dbReference>
<dbReference type="FunFam" id="2.170.270.10:FF:000041">
    <property type="entry name" value="Histone-lysine N-methyltransferase SETMAR"/>
    <property type="match status" value="1"/>
</dbReference>
<dbReference type="FunFam" id="3.30.420.10:FF:000083">
    <property type="entry name" value="SET domain and mariner transposase fusion gene"/>
    <property type="match status" value="1"/>
</dbReference>
<dbReference type="Gene3D" id="1.10.10.1450">
    <property type="match status" value="1"/>
</dbReference>
<dbReference type="Gene3D" id="3.30.420.10">
    <property type="entry name" value="Ribonuclease H-like superfamily/Ribonuclease H"/>
    <property type="match status" value="1"/>
</dbReference>
<dbReference type="Gene3D" id="2.170.270.10">
    <property type="entry name" value="SET domain"/>
    <property type="match status" value="1"/>
</dbReference>
<dbReference type="Gene3D" id="1.10.10.10">
    <property type="entry name" value="Winged helix-like DNA-binding domain superfamily/Winged helix DNA-binding domain"/>
    <property type="match status" value="1"/>
</dbReference>
<dbReference type="InterPro" id="IPR041426">
    <property type="entry name" value="Mos1_HTH"/>
</dbReference>
<dbReference type="InterPro" id="IPR003616">
    <property type="entry name" value="Post-SET_dom"/>
</dbReference>
<dbReference type="InterPro" id="IPR007728">
    <property type="entry name" value="Pre-SET_dom"/>
</dbReference>
<dbReference type="InterPro" id="IPR036397">
    <property type="entry name" value="RNaseH_sf"/>
</dbReference>
<dbReference type="InterPro" id="IPR001214">
    <property type="entry name" value="SET_dom"/>
</dbReference>
<dbReference type="InterPro" id="IPR046341">
    <property type="entry name" value="SET_dom_sf"/>
</dbReference>
<dbReference type="InterPro" id="IPR052709">
    <property type="entry name" value="Transposase-MT_Hybrid"/>
</dbReference>
<dbReference type="InterPro" id="IPR001888">
    <property type="entry name" value="Transposase_1"/>
</dbReference>
<dbReference type="InterPro" id="IPR036388">
    <property type="entry name" value="WH-like_DNA-bd_sf"/>
</dbReference>
<dbReference type="PANTHER" id="PTHR46060:SF2">
    <property type="entry name" value="HISTONE-LYSINE N-METHYLTRANSFERASE SETMAR"/>
    <property type="match status" value="1"/>
</dbReference>
<dbReference type="PANTHER" id="PTHR46060">
    <property type="entry name" value="MARINER MOS1 TRANSPOSASE-LIKE PROTEIN"/>
    <property type="match status" value="1"/>
</dbReference>
<dbReference type="Pfam" id="PF17906">
    <property type="entry name" value="HTH_48"/>
    <property type="match status" value="1"/>
</dbReference>
<dbReference type="Pfam" id="PF05033">
    <property type="entry name" value="Pre-SET"/>
    <property type="match status" value="1"/>
</dbReference>
<dbReference type="Pfam" id="PF00856">
    <property type="entry name" value="SET"/>
    <property type="match status" value="1"/>
</dbReference>
<dbReference type="Pfam" id="PF01359">
    <property type="entry name" value="Transposase_1"/>
    <property type="match status" value="1"/>
</dbReference>
<dbReference type="SMART" id="SM00468">
    <property type="entry name" value="PreSET"/>
    <property type="match status" value="1"/>
</dbReference>
<dbReference type="SMART" id="SM00317">
    <property type="entry name" value="SET"/>
    <property type="match status" value="1"/>
</dbReference>
<dbReference type="SUPFAM" id="SSF82199">
    <property type="entry name" value="SET domain"/>
    <property type="match status" value="1"/>
</dbReference>
<dbReference type="PROSITE" id="PS50868">
    <property type="entry name" value="POST_SET"/>
    <property type="match status" value="1"/>
</dbReference>
<dbReference type="PROSITE" id="PS50867">
    <property type="entry name" value="PRE_SET"/>
    <property type="match status" value="1"/>
</dbReference>
<dbReference type="PROSITE" id="PS50280">
    <property type="entry name" value="SET"/>
    <property type="match status" value="1"/>
</dbReference>